<evidence type="ECO:0000255" key="1"/>
<evidence type="ECO:0000269" key="2">
    <source>
    </source>
</evidence>
<evidence type="ECO:0000303" key="3">
    <source>
    </source>
</evidence>
<evidence type="ECO:0000305" key="4">
    <source>
    </source>
</evidence>
<evidence type="ECO:0000305" key="5">
    <source>
    </source>
</evidence>
<evidence type="ECO:0000312" key="6">
    <source>
        <dbReference type="EMBL" id="ACZ37398.1"/>
    </source>
</evidence>
<feature type="signal peptide" evidence="1">
    <location>
        <begin position="1"/>
        <end position="26"/>
    </location>
</feature>
<feature type="propeptide" id="PRO_0000453653" evidence="4">
    <location>
        <begin position="27"/>
        <end position="42"/>
    </location>
</feature>
<feature type="peptide" id="PRO_5003025095" description="Venom peptide 5" evidence="4">
    <location>
        <begin position="43"/>
        <end position="56"/>
    </location>
</feature>
<feature type="disulfide bond" evidence="5">
    <location>
        <begin position="49"/>
        <end position="54"/>
    </location>
</feature>
<protein>
    <recommendedName>
        <fullName evidence="3">Venom peptide 5</fullName>
        <shortName evidence="3">EpVP5</shortName>
        <shortName evidence="6">VP5</shortName>
    </recommendedName>
</protein>
<organism>
    <name type="scientific">Eumenes pomiformis</name>
    <name type="common">Potter wasp</name>
    <name type="synonym">Vespa pomiformis</name>
    <dbReference type="NCBI Taxonomy" id="693051"/>
    <lineage>
        <taxon>Eukaryota</taxon>
        <taxon>Metazoa</taxon>
        <taxon>Ecdysozoa</taxon>
        <taxon>Arthropoda</taxon>
        <taxon>Hexapoda</taxon>
        <taxon>Insecta</taxon>
        <taxon>Pterygota</taxon>
        <taxon>Neoptera</taxon>
        <taxon>Endopterygota</taxon>
        <taxon>Hymenoptera</taxon>
        <taxon>Apocrita</taxon>
        <taxon>Aculeata</taxon>
        <taxon>Vespoidea</taxon>
        <taxon>Vespidae</taxon>
        <taxon>Eumeninae</taxon>
        <taxon>Eumenes</taxon>
    </lineage>
</organism>
<comment type="subcellular location">
    <subcellularLocation>
        <location evidence="4">Secreted</location>
    </subcellularLocation>
    <text evidence="5">Has a coil conformation.</text>
</comment>
<comment type="tissue specificity">
    <text evidence="4">Expressed by the venom gland.</text>
</comment>
<comment type="PTM">
    <text evidence="5">Probably contains 1 disulfide bond, which may be crucial for activity, since the linear peptide without disulfide bond is inactive.</text>
</comment>
<comment type="miscellaneous">
    <text evidence="4">Not found in venom, suggesting that it is a minor component.</text>
</comment>
<comment type="miscellaneous">
    <text evidence="2">Negative results: The synthetic peptide (tested without disulfide bond) does not show activity against fungi (B.cinerea and C.albicans) and bacteria (E.coli and S.aureus) (PubMed:21184791). Has no hemolytic activity against human erythrocytes (PubMed:21184791). Does not show cytolytic activity against insect cell lines (PubMed:21184791). Does not induce feeding disorder in lepidopteran larvae after peptide injection in the vicinity of the head and thorax (PubMed:21184791).</text>
</comment>
<accession>D1MEJ2</accession>
<proteinExistence type="evidence at protein level"/>
<reference key="1">
    <citation type="journal article" date="2010" name="Toxicon">
        <title>Differential gene expression profiles in the venom gland/sac of Eumenes pomiformis (Hymenoptera: Eumenidae).</title>
        <authorList>
            <person name="Baek J.H."/>
            <person name="Lee S.H."/>
        </authorList>
    </citation>
    <scope>NUCLEOTIDE SEQUENCE [MRNA]</scope>
    <source>
        <tissue>Venom gland</tissue>
    </source>
</reference>
<reference key="2">
    <citation type="journal article" date="2011" name="Peptides">
        <title>Venom peptides from solitary hunting wasps induce feeding disorder in lepidopteran larvae.</title>
        <authorList>
            <person name="Baek J.H."/>
            <person name="Ji Y."/>
            <person name="Shin J.S."/>
            <person name="Lee S."/>
            <person name="Lee S.H."/>
        </authorList>
    </citation>
    <scope>PROBABLE DISULFIDE BOND</scope>
    <scope>SYNTHESIS OF 43-56</scope>
</reference>
<sequence length="56" mass="6025">MKTASFILSFVVLLIVIITWIGEVSAVSEPEPVAKATAHAAAVHVPPICSHRECRK</sequence>
<dbReference type="EMBL" id="GU136237">
    <property type="protein sequence ID" value="ACZ37398.1"/>
    <property type="molecule type" value="mRNA"/>
</dbReference>
<dbReference type="SMR" id="D1MEJ2"/>
<dbReference type="GO" id="GO:0005576">
    <property type="term" value="C:extracellular region"/>
    <property type="evidence" value="ECO:0007669"/>
    <property type="project" value="UniProtKB-SubCell"/>
</dbReference>
<keyword id="KW-1015">Disulfide bond</keyword>
<keyword id="KW-0964">Secreted</keyword>
<keyword id="KW-0732">Signal</keyword>
<name>VP5_EUMPO</name>